<name>GCS2_ACIET</name>
<feature type="chain" id="PRO_1000185846" description="Putative glutamate--cysteine ligase 2">
    <location>
        <begin position="1"/>
        <end position="374"/>
    </location>
</feature>
<comment type="function">
    <text evidence="1">ATP-dependent carboxylate-amine ligase which exhibits weak glutamate--cysteine ligase activity.</text>
</comment>
<comment type="catalytic activity">
    <reaction evidence="1">
        <text>L-cysteine + L-glutamate + ATP = gamma-L-glutamyl-L-cysteine + ADP + phosphate + H(+)</text>
        <dbReference type="Rhea" id="RHEA:13285"/>
        <dbReference type="ChEBI" id="CHEBI:15378"/>
        <dbReference type="ChEBI" id="CHEBI:29985"/>
        <dbReference type="ChEBI" id="CHEBI:30616"/>
        <dbReference type="ChEBI" id="CHEBI:35235"/>
        <dbReference type="ChEBI" id="CHEBI:43474"/>
        <dbReference type="ChEBI" id="CHEBI:58173"/>
        <dbReference type="ChEBI" id="CHEBI:456216"/>
        <dbReference type="EC" id="6.3.2.2"/>
    </reaction>
</comment>
<comment type="similarity">
    <text evidence="1">Belongs to the glutamate--cysteine ligase type 2 family. YbdK subfamily.</text>
</comment>
<evidence type="ECO:0000255" key="1">
    <source>
        <dbReference type="HAMAP-Rule" id="MF_01609"/>
    </source>
</evidence>
<proteinExistence type="inferred from homology"/>
<accession>B9MBR0</accession>
<keyword id="KW-0067">ATP-binding</keyword>
<keyword id="KW-0436">Ligase</keyword>
<keyword id="KW-0547">Nucleotide-binding</keyword>
<keyword id="KW-1185">Reference proteome</keyword>
<dbReference type="EC" id="6.3.2.2" evidence="1"/>
<dbReference type="EMBL" id="CP001392">
    <property type="protein sequence ID" value="ACM31830.1"/>
    <property type="molecule type" value="Genomic_DNA"/>
</dbReference>
<dbReference type="RefSeq" id="WP_012655413.1">
    <property type="nucleotide sequence ID" value="NC_011992.1"/>
</dbReference>
<dbReference type="SMR" id="B9MBR0"/>
<dbReference type="KEGG" id="dia:Dtpsy_0346"/>
<dbReference type="eggNOG" id="COG2170">
    <property type="taxonomic scope" value="Bacteria"/>
</dbReference>
<dbReference type="HOGENOM" id="CLU_044848_1_1_4"/>
<dbReference type="Proteomes" id="UP000000450">
    <property type="component" value="Chromosome"/>
</dbReference>
<dbReference type="GO" id="GO:0005524">
    <property type="term" value="F:ATP binding"/>
    <property type="evidence" value="ECO:0007669"/>
    <property type="project" value="UniProtKB-KW"/>
</dbReference>
<dbReference type="GO" id="GO:0004357">
    <property type="term" value="F:glutamate-cysteine ligase activity"/>
    <property type="evidence" value="ECO:0007669"/>
    <property type="project" value="UniProtKB-EC"/>
</dbReference>
<dbReference type="GO" id="GO:0042398">
    <property type="term" value="P:modified amino acid biosynthetic process"/>
    <property type="evidence" value="ECO:0007669"/>
    <property type="project" value="InterPro"/>
</dbReference>
<dbReference type="Gene3D" id="3.30.590.20">
    <property type="match status" value="1"/>
</dbReference>
<dbReference type="HAMAP" id="MF_01609">
    <property type="entry name" value="Glu_cys_ligase_2"/>
    <property type="match status" value="1"/>
</dbReference>
<dbReference type="InterPro" id="IPR050141">
    <property type="entry name" value="GCL_type2/YbdK_subfam"/>
</dbReference>
<dbReference type="InterPro" id="IPR006336">
    <property type="entry name" value="GCS2"/>
</dbReference>
<dbReference type="InterPro" id="IPR014746">
    <property type="entry name" value="Gln_synth/guanido_kin_cat_dom"/>
</dbReference>
<dbReference type="InterPro" id="IPR011793">
    <property type="entry name" value="YbdK"/>
</dbReference>
<dbReference type="NCBIfam" id="TIGR02050">
    <property type="entry name" value="gshA_cyan_rel"/>
    <property type="match status" value="1"/>
</dbReference>
<dbReference type="NCBIfam" id="NF010040">
    <property type="entry name" value="PRK13516.1"/>
    <property type="match status" value="1"/>
</dbReference>
<dbReference type="PANTHER" id="PTHR36510">
    <property type="entry name" value="GLUTAMATE--CYSTEINE LIGASE 2-RELATED"/>
    <property type="match status" value="1"/>
</dbReference>
<dbReference type="PANTHER" id="PTHR36510:SF1">
    <property type="entry name" value="GLUTAMATE--CYSTEINE LIGASE 2-RELATED"/>
    <property type="match status" value="1"/>
</dbReference>
<dbReference type="Pfam" id="PF04107">
    <property type="entry name" value="GCS2"/>
    <property type="match status" value="1"/>
</dbReference>
<dbReference type="SUPFAM" id="SSF55931">
    <property type="entry name" value="Glutamine synthetase/guanido kinase"/>
    <property type="match status" value="1"/>
</dbReference>
<organism>
    <name type="scientific">Acidovorax ebreus (strain TPSY)</name>
    <name type="common">Diaphorobacter sp. (strain TPSY)</name>
    <dbReference type="NCBI Taxonomy" id="535289"/>
    <lineage>
        <taxon>Bacteria</taxon>
        <taxon>Pseudomonadati</taxon>
        <taxon>Pseudomonadota</taxon>
        <taxon>Betaproteobacteria</taxon>
        <taxon>Burkholderiales</taxon>
        <taxon>Comamonadaceae</taxon>
        <taxon>Diaphorobacter</taxon>
    </lineage>
</organism>
<sequence>MSLEAFHHSEPLTLGVELELQLVSTNDYDLAPYAEDMLRLMKKVPLPGSVVPEMTNSMIEISTGVCHSSSEVLGQLTQIRDALVKSADKLNIAVVGGGTHPFQQWHERRIYDKPRFQELSQLYGYLSKQFTIFGQHVHIGCPDADSALLMLHRMSRYIPHFIALSASSPYVQAQDTQFDSARLNSVFAFPLSGRAPCVLTWSEFEQYFNKMTRTGVVKSMKDFYWDIRPKPEYGTIEIRVFDTPLTIERAAALAGYVQSLAAWFLAEQPFTPTEDDYLVYTYNRFQACRFGLDAVYVDPASGDHMPLRDHILQTLDHVARYAGTHGASGALHMLRGETALGQNDARWLRERQREEQLLAEVSRQAALRFRGHDI</sequence>
<reference key="1">
    <citation type="submission" date="2009-01" db="EMBL/GenBank/DDBJ databases">
        <title>Complete sequence of Diaphorobacter sp. TPSY.</title>
        <authorList>
            <consortium name="US DOE Joint Genome Institute"/>
            <person name="Lucas S."/>
            <person name="Copeland A."/>
            <person name="Lapidus A."/>
            <person name="Glavina del Rio T."/>
            <person name="Tice H."/>
            <person name="Bruce D."/>
            <person name="Goodwin L."/>
            <person name="Pitluck S."/>
            <person name="Chertkov O."/>
            <person name="Brettin T."/>
            <person name="Detter J.C."/>
            <person name="Han C."/>
            <person name="Larimer F."/>
            <person name="Land M."/>
            <person name="Hauser L."/>
            <person name="Kyrpides N."/>
            <person name="Mikhailova N."/>
            <person name="Coates J.D."/>
        </authorList>
    </citation>
    <scope>NUCLEOTIDE SEQUENCE [LARGE SCALE GENOMIC DNA]</scope>
    <source>
        <strain>TPSY</strain>
    </source>
</reference>
<gene>
    <name type="ordered locus">Dtpsy_0346</name>
</gene>
<protein>
    <recommendedName>
        <fullName evidence="1">Putative glutamate--cysteine ligase 2</fullName>
        <ecNumber evidence="1">6.3.2.2</ecNumber>
    </recommendedName>
    <alternativeName>
        <fullName evidence="1">Gamma-glutamylcysteine synthetase 2</fullName>
        <shortName evidence="1">GCS 2</shortName>
        <shortName evidence="1">Gamma-GCS 2</shortName>
    </alternativeName>
</protein>